<keyword id="KW-0963">Cytoplasm</keyword>
<keyword id="KW-0396">Initiation factor</keyword>
<keyword id="KW-0648">Protein biosynthesis</keyword>
<keyword id="KW-0694">RNA-binding</keyword>
<keyword id="KW-0699">rRNA-binding</keyword>
<proteinExistence type="inferred from homology"/>
<protein>
    <recommendedName>
        <fullName evidence="1">Translation initiation factor IF-1</fullName>
    </recommendedName>
</protein>
<sequence>MAKKDGAIEVEGRVVEPLPNAMFRIELENGHKVLAHISGKMRQHYIRILPEDRVVVELSPYDLTRGRIVYRYK</sequence>
<reference key="1">
    <citation type="submission" date="2007-04" db="EMBL/GenBank/DDBJ databases">
        <title>Complete sequence of chromosome of Mycobacterium gilvum PYR-GCK.</title>
        <authorList>
            <consortium name="US DOE Joint Genome Institute"/>
            <person name="Copeland A."/>
            <person name="Lucas S."/>
            <person name="Lapidus A."/>
            <person name="Barry K."/>
            <person name="Detter J.C."/>
            <person name="Glavina del Rio T."/>
            <person name="Hammon N."/>
            <person name="Israni S."/>
            <person name="Dalin E."/>
            <person name="Tice H."/>
            <person name="Pitluck S."/>
            <person name="Chain P."/>
            <person name="Malfatti S."/>
            <person name="Shin M."/>
            <person name="Vergez L."/>
            <person name="Schmutz J."/>
            <person name="Larimer F."/>
            <person name="Land M."/>
            <person name="Hauser L."/>
            <person name="Kyrpides N."/>
            <person name="Mikhailova N."/>
            <person name="Miller C."/>
            <person name="Richardson P."/>
        </authorList>
    </citation>
    <scope>NUCLEOTIDE SEQUENCE [LARGE SCALE GENOMIC DNA]</scope>
    <source>
        <strain>PYR-GCK</strain>
    </source>
</reference>
<accession>A4TEI3</accession>
<comment type="function">
    <text evidence="1">One of the essential components for the initiation of protein synthesis. Stabilizes the binding of IF-2 and IF-3 on the 30S subunit to which N-formylmethionyl-tRNA(fMet) subsequently binds. Helps modulate mRNA selection, yielding the 30S pre-initiation complex (PIC). Upon addition of the 50S ribosomal subunit IF-1, IF-2 and IF-3 are released leaving the mature 70S translation initiation complex.</text>
</comment>
<comment type="subunit">
    <text evidence="1">Component of the 30S ribosomal translation pre-initiation complex which assembles on the 30S ribosome in the order IF-2 and IF-3, IF-1 and N-formylmethionyl-tRNA(fMet); mRNA recruitment can occur at any time during PIC assembly.</text>
</comment>
<comment type="subcellular location">
    <subcellularLocation>
        <location evidence="1">Cytoplasm</location>
    </subcellularLocation>
</comment>
<comment type="similarity">
    <text evidence="1">Belongs to the IF-1 family.</text>
</comment>
<organism>
    <name type="scientific">Mycolicibacterium gilvum (strain PYR-GCK)</name>
    <name type="common">Mycobacterium gilvum (strain PYR-GCK)</name>
    <dbReference type="NCBI Taxonomy" id="350054"/>
    <lineage>
        <taxon>Bacteria</taxon>
        <taxon>Bacillati</taxon>
        <taxon>Actinomycetota</taxon>
        <taxon>Actinomycetes</taxon>
        <taxon>Mycobacteriales</taxon>
        <taxon>Mycobacteriaceae</taxon>
        <taxon>Mycolicibacterium</taxon>
    </lineage>
</organism>
<feature type="chain" id="PRO_0000338861" description="Translation initiation factor IF-1">
    <location>
        <begin position="1"/>
        <end position="73"/>
    </location>
</feature>
<feature type="domain" description="S1-like" evidence="1">
    <location>
        <begin position="1"/>
        <end position="73"/>
    </location>
</feature>
<name>IF1_MYCGI</name>
<dbReference type="EMBL" id="CP000656">
    <property type="protein sequence ID" value="ABP47440.1"/>
    <property type="molecule type" value="Genomic_DNA"/>
</dbReference>
<dbReference type="SMR" id="A4TEI3"/>
<dbReference type="STRING" id="350054.Mflv_4974"/>
<dbReference type="KEGG" id="mgi:Mflv_4974"/>
<dbReference type="eggNOG" id="COG0361">
    <property type="taxonomic scope" value="Bacteria"/>
</dbReference>
<dbReference type="HOGENOM" id="CLU_151267_1_0_11"/>
<dbReference type="OrthoDB" id="9803250at2"/>
<dbReference type="GO" id="GO:0005829">
    <property type="term" value="C:cytosol"/>
    <property type="evidence" value="ECO:0007669"/>
    <property type="project" value="TreeGrafter"/>
</dbReference>
<dbReference type="GO" id="GO:0043022">
    <property type="term" value="F:ribosome binding"/>
    <property type="evidence" value="ECO:0007669"/>
    <property type="project" value="UniProtKB-UniRule"/>
</dbReference>
<dbReference type="GO" id="GO:0019843">
    <property type="term" value="F:rRNA binding"/>
    <property type="evidence" value="ECO:0007669"/>
    <property type="project" value="UniProtKB-UniRule"/>
</dbReference>
<dbReference type="GO" id="GO:0003743">
    <property type="term" value="F:translation initiation factor activity"/>
    <property type="evidence" value="ECO:0007669"/>
    <property type="project" value="UniProtKB-UniRule"/>
</dbReference>
<dbReference type="CDD" id="cd04451">
    <property type="entry name" value="S1_IF1"/>
    <property type="match status" value="1"/>
</dbReference>
<dbReference type="FunFam" id="2.40.50.140:FF:000002">
    <property type="entry name" value="Translation initiation factor IF-1"/>
    <property type="match status" value="1"/>
</dbReference>
<dbReference type="Gene3D" id="2.40.50.140">
    <property type="entry name" value="Nucleic acid-binding proteins"/>
    <property type="match status" value="1"/>
</dbReference>
<dbReference type="HAMAP" id="MF_00075">
    <property type="entry name" value="IF_1"/>
    <property type="match status" value="1"/>
</dbReference>
<dbReference type="InterPro" id="IPR012340">
    <property type="entry name" value="NA-bd_OB-fold"/>
</dbReference>
<dbReference type="InterPro" id="IPR006196">
    <property type="entry name" value="RNA-binding_domain_S1_IF1"/>
</dbReference>
<dbReference type="InterPro" id="IPR004368">
    <property type="entry name" value="TIF_IF1"/>
</dbReference>
<dbReference type="NCBIfam" id="TIGR00008">
    <property type="entry name" value="infA"/>
    <property type="match status" value="1"/>
</dbReference>
<dbReference type="PANTHER" id="PTHR33370">
    <property type="entry name" value="TRANSLATION INITIATION FACTOR IF-1, CHLOROPLASTIC"/>
    <property type="match status" value="1"/>
</dbReference>
<dbReference type="PANTHER" id="PTHR33370:SF1">
    <property type="entry name" value="TRANSLATION INITIATION FACTOR IF-1, CHLOROPLASTIC"/>
    <property type="match status" value="1"/>
</dbReference>
<dbReference type="Pfam" id="PF01176">
    <property type="entry name" value="eIF-1a"/>
    <property type="match status" value="1"/>
</dbReference>
<dbReference type="SUPFAM" id="SSF50249">
    <property type="entry name" value="Nucleic acid-binding proteins"/>
    <property type="match status" value="1"/>
</dbReference>
<dbReference type="PROSITE" id="PS50832">
    <property type="entry name" value="S1_IF1_TYPE"/>
    <property type="match status" value="1"/>
</dbReference>
<evidence type="ECO:0000255" key="1">
    <source>
        <dbReference type="HAMAP-Rule" id="MF_00075"/>
    </source>
</evidence>
<gene>
    <name evidence="1" type="primary">infA</name>
    <name type="ordered locus">Mflv_4974</name>
</gene>